<protein>
    <recommendedName>
        <fullName evidence="6">Protein boule-like</fullName>
    </recommendedName>
</protein>
<evidence type="ECO:0000250" key="1"/>
<evidence type="ECO:0000255" key="2">
    <source>
        <dbReference type="PROSITE-ProRule" id="PRU00176"/>
    </source>
</evidence>
<evidence type="ECO:0000255" key="3">
    <source>
        <dbReference type="PROSITE-ProRule" id="PRU01238"/>
    </source>
</evidence>
<evidence type="ECO:0000256" key="4">
    <source>
        <dbReference type="SAM" id="MobiDB-lite"/>
    </source>
</evidence>
<evidence type="ECO:0000269" key="5">
    <source>
    </source>
</evidence>
<evidence type="ECO:0000305" key="6"/>
<evidence type="ECO:0000312" key="7">
    <source>
        <dbReference type="MGI" id="MGI:1922638"/>
    </source>
</evidence>
<evidence type="ECO:0007744" key="8">
    <source>
    </source>
</evidence>
<comment type="function">
    <text evidence="1">Probable RNA-binding protein, which may be required during spermatogenesis. May act by binding to the 3'-UTR of mRNAs and regulating their translation (By similarity).</text>
</comment>
<comment type="subunit">
    <text evidence="1">Interacts with DAZ1 and DAZL.</text>
</comment>
<comment type="subcellular location">
    <subcellularLocation>
        <location evidence="5">Cytoplasm</location>
    </subcellularLocation>
</comment>
<comment type="alternative products">
    <event type="alternative splicing"/>
    <isoform>
        <id>Q924M5-3</id>
        <name>3</name>
        <sequence type="displayed"/>
    </isoform>
    <isoform>
        <id>Q924M5-2</id>
        <name>2</name>
        <sequence type="described" ref="VSP_061272 VSP_061273"/>
    </isoform>
</comment>
<comment type="tissue specificity">
    <text evidence="5">Testis specific. Not expressed in early embryos, primoridal germ cells and spermatogonial cells. First expressed in the cytoplasm of spermatocytes and then persists through meiosis.</text>
</comment>
<comment type="developmental stage">
    <text evidence="5">First expressed in stage III spermatocytes and peaks in late pachytene or diplotene stage spermatocytes. Expressed in secondary spermatocytes and early spermatids, then decreases until it is undetectable in spermatids.</text>
</comment>
<comment type="similarity">
    <text evidence="3">Belongs to the RRM DAZ family.</text>
</comment>
<proteinExistence type="evidence at protein level"/>
<sequence>METESRAQSTNQTQTDSLSPSPNPVSPVPLNNPTSGPRYGTVIPNRIFVGGIDFKTNENDLRKFFSQYGSVKEVKIVNDRAGVSKGYGFITFETQEDAQKILQEAEKLNYKDKKLNIGPAIRKQQVGIPRSSLMPAAGTMYLTTSTGYPYTYHNGVAYFHTPEVTSVPPSWPSRSISSSPVMVAQPVYQQPAYHYQAPAQCLPGQWQWGVPQSPASSAPFLYLQPSEVIYQPVEIAQDGGCVPPPLSLMETSVPEPYSDHGVQAAYHQVYASSAIAMPAPMMQPEPIKVRSLF</sequence>
<name>BOLL_MOUSE</name>
<accession>Q924M5</accession>
<accession>E9QPQ9</accession>
<accession>Q9D4V2</accession>
<keyword id="KW-0025">Alternative splicing</keyword>
<keyword id="KW-0963">Cytoplasm</keyword>
<keyword id="KW-0217">Developmental protein</keyword>
<keyword id="KW-0221">Differentiation</keyword>
<keyword id="KW-0597">Phosphoprotein</keyword>
<keyword id="KW-1185">Reference proteome</keyword>
<keyword id="KW-0694">RNA-binding</keyword>
<keyword id="KW-0744">Spermatogenesis</keyword>
<keyword id="KW-0810">Translation regulation</keyword>
<dbReference type="EMBL" id="AF272859">
    <property type="protein sequence ID" value="AAK69026.1"/>
    <property type="molecule type" value="mRNA"/>
</dbReference>
<dbReference type="EMBL" id="AK016125">
    <property type="protein sequence ID" value="BAB30121.1"/>
    <property type="molecule type" value="mRNA"/>
</dbReference>
<dbReference type="CCDS" id="CCDS48262.1">
    <molecule id="Q924M5-3"/>
</dbReference>
<dbReference type="RefSeq" id="NP_001106838.1">
    <property type="nucleotide sequence ID" value="NM_001113367.1"/>
</dbReference>
<dbReference type="RefSeq" id="NP_083543.2">
    <molecule id="Q924M5-3"/>
    <property type="nucleotide sequence ID" value="NM_029267.5"/>
</dbReference>
<dbReference type="SMR" id="Q924M5"/>
<dbReference type="FunCoup" id="Q924M5">
    <property type="interactions" value="750"/>
</dbReference>
<dbReference type="IntAct" id="Q924M5">
    <property type="interactions" value="1"/>
</dbReference>
<dbReference type="STRING" id="10090.ENSMUSP00000084868"/>
<dbReference type="iPTMnet" id="Q924M5"/>
<dbReference type="PhosphoSitePlus" id="Q924M5"/>
<dbReference type="SwissPalm" id="Q924M5"/>
<dbReference type="PaxDb" id="10090-ENSMUSP00000084868"/>
<dbReference type="ProteomicsDB" id="273837">
    <molecule id="Q924M5-2"/>
</dbReference>
<dbReference type="ProteomicsDB" id="322815"/>
<dbReference type="Antibodypedia" id="19911">
    <property type="antibodies" value="493 antibodies from 29 providers"/>
</dbReference>
<dbReference type="DNASU" id="75388"/>
<dbReference type="Ensembl" id="ENSMUST00000087585.10">
    <molecule id="Q924M5-3"/>
    <property type="protein sequence ID" value="ENSMUSP00000084868.4"/>
    <property type="gene ID" value="ENSMUSG00000025977.16"/>
</dbReference>
<dbReference type="Ensembl" id="ENSMUST00000159398.2">
    <molecule id="Q924M5-2"/>
    <property type="protein sequence ID" value="ENSMUSP00000123814.2"/>
    <property type="gene ID" value="ENSMUSG00000025977.16"/>
</dbReference>
<dbReference type="GeneID" id="75388"/>
<dbReference type="KEGG" id="mmu:75388"/>
<dbReference type="UCSC" id="uc007bam.1">
    <molecule id="Q924M5-2"/>
    <property type="organism name" value="mouse"/>
</dbReference>
<dbReference type="UCSC" id="uc011wlb.1">
    <molecule id="Q924M5-3"/>
    <property type="organism name" value="mouse"/>
</dbReference>
<dbReference type="AGR" id="MGI:1922638"/>
<dbReference type="CTD" id="66037"/>
<dbReference type="MGI" id="MGI:1922638">
    <property type="gene designation" value="Boll"/>
</dbReference>
<dbReference type="VEuPathDB" id="HostDB:ENSMUSG00000025977"/>
<dbReference type="eggNOG" id="KOG0118">
    <property type="taxonomic scope" value="Eukaryota"/>
</dbReference>
<dbReference type="GeneTree" id="ENSGT00530000063480"/>
<dbReference type="InParanoid" id="Q924M5"/>
<dbReference type="OMA" id="MSCGTFY"/>
<dbReference type="OrthoDB" id="762982at2759"/>
<dbReference type="TreeFam" id="TF324396"/>
<dbReference type="BioGRID-ORCS" id="75388">
    <property type="hits" value="1 hit in 78 CRISPR screens"/>
</dbReference>
<dbReference type="ChiTaRS" id="Boll">
    <property type="organism name" value="mouse"/>
</dbReference>
<dbReference type="PRO" id="PR:Q924M5"/>
<dbReference type="Proteomes" id="UP000000589">
    <property type="component" value="Chromosome 1"/>
</dbReference>
<dbReference type="RNAct" id="Q924M5">
    <property type="molecule type" value="protein"/>
</dbReference>
<dbReference type="Bgee" id="ENSMUSG00000025977">
    <property type="expression patterns" value="Expressed in spermatocyte and 51 other cell types or tissues"/>
</dbReference>
<dbReference type="ExpressionAtlas" id="Q924M5">
    <property type="expression patterns" value="baseline and differential"/>
</dbReference>
<dbReference type="GO" id="GO:0005737">
    <property type="term" value="C:cytoplasm"/>
    <property type="evidence" value="ECO:0000266"/>
    <property type="project" value="MGI"/>
</dbReference>
<dbReference type="GO" id="GO:0042802">
    <property type="term" value="F:identical protein binding"/>
    <property type="evidence" value="ECO:0007669"/>
    <property type="project" value="Ensembl"/>
</dbReference>
<dbReference type="GO" id="GO:0003723">
    <property type="term" value="F:RNA binding"/>
    <property type="evidence" value="ECO:0007669"/>
    <property type="project" value="UniProtKB-KW"/>
</dbReference>
<dbReference type="GO" id="GO:0008494">
    <property type="term" value="F:translation activator activity"/>
    <property type="evidence" value="ECO:0007669"/>
    <property type="project" value="Ensembl"/>
</dbReference>
<dbReference type="GO" id="GO:0030154">
    <property type="term" value="P:cell differentiation"/>
    <property type="evidence" value="ECO:0007669"/>
    <property type="project" value="UniProtKB-KW"/>
</dbReference>
<dbReference type="GO" id="GO:0051321">
    <property type="term" value="P:meiotic cell cycle"/>
    <property type="evidence" value="ECO:0000266"/>
    <property type="project" value="MGI"/>
</dbReference>
<dbReference type="GO" id="GO:0045948">
    <property type="term" value="P:positive regulation of translational initiation"/>
    <property type="evidence" value="ECO:0007669"/>
    <property type="project" value="Ensembl"/>
</dbReference>
<dbReference type="GO" id="GO:0007283">
    <property type="term" value="P:spermatogenesis"/>
    <property type="evidence" value="ECO:0007669"/>
    <property type="project" value="UniProtKB-KW"/>
</dbReference>
<dbReference type="CDD" id="cd12673">
    <property type="entry name" value="RRM_BOULE"/>
    <property type="match status" value="1"/>
</dbReference>
<dbReference type="FunFam" id="3.30.70.330:FF:000167">
    <property type="entry name" value="protein boule-like isoform X1"/>
    <property type="match status" value="1"/>
</dbReference>
<dbReference type="Gene3D" id="3.30.70.330">
    <property type="match status" value="1"/>
</dbReference>
<dbReference type="InterPro" id="IPR043628">
    <property type="entry name" value="DAZ_dom"/>
</dbReference>
<dbReference type="InterPro" id="IPR012677">
    <property type="entry name" value="Nucleotide-bd_a/b_plait_sf"/>
</dbReference>
<dbReference type="InterPro" id="IPR035979">
    <property type="entry name" value="RBD_domain_sf"/>
</dbReference>
<dbReference type="InterPro" id="IPR000504">
    <property type="entry name" value="RRM_dom"/>
</dbReference>
<dbReference type="PANTHER" id="PTHR11176">
    <property type="entry name" value="BOULE-RELATED"/>
    <property type="match status" value="1"/>
</dbReference>
<dbReference type="PANTHER" id="PTHR11176:SF10">
    <property type="entry name" value="PROTEIN BOULE-LIKE"/>
    <property type="match status" value="1"/>
</dbReference>
<dbReference type="Pfam" id="PF00076">
    <property type="entry name" value="RRM_1"/>
    <property type="match status" value="1"/>
</dbReference>
<dbReference type="SMART" id="SM00360">
    <property type="entry name" value="RRM"/>
    <property type="match status" value="1"/>
</dbReference>
<dbReference type="SUPFAM" id="SSF54928">
    <property type="entry name" value="RNA-binding domain, RBD"/>
    <property type="match status" value="1"/>
</dbReference>
<dbReference type="PROSITE" id="PS51890">
    <property type="entry name" value="DAZ"/>
    <property type="match status" value="1"/>
</dbReference>
<dbReference type="PROSITE" id="PS50102">
    <property type="entry name" value="RRM"/>
    <property type="match status" value="1"/>
</dbReference>
<feature type="chain" id="PRO_0000081496" description="Protein boule-like">
    <location>
        <begin position="1"/>
        <end position="293"/>
    </location>
</feature>
<feature type="domain" description="RRM" evidence="2">
    <location>
        <begin position="45"/>
        <end position="122"/>
    </location>
</feature>
<feature type="domain" description="DAZ" evidence="3">
    <location>
        <begin position="172"/>
        <end position="196"/>
    </location>
</feature>
<feature type="region of interest" description="Disordered" evidence="4">
    <location>
        <begin position="1"/>
        <end position="39"/>
    </location>
</feature>
<feature type="compositionally biased region" description="Polar residues" evidence="4">
    <location>
        <begin position="1"/>
        <end position="16"/>
    </location>
</feature>
<feature type="splice variant" id="VSP_061272" description="In isoform 2.">
    <original>SS</original>
    <variation>MY</variation>
    <location>
        <begin position="131"/>
        <end position="132"/>
    </location>
</feature>
<feature type="splice variant" id="VSP_061273" description="In isoform 2.">
    <location>
        <begin position="133"/>
        <end position="293"/>
    </location>
</feature>
<feature type="modified residue" description="Phosphoserine" evidence="8">
    <location sequence="Q924M5-2">
        <position position="19"/>
    </location>
</feature>
<feature type="modified residue" description="Phosphoserine" evidence="8">
    <location sequence="Q924M5-2">
        <position position="21"/>
    </location>
</feature>
<feature type="modified residue" description="Phosphoserine" evidence="8">
    <location sequence="Q924M5-2">
        <position position="26"/>
    </location>
</feature>
<organism>
    <name type="scientific">Mus musculus</name>
    <name type="common">Mouse</name>
    <dbReference type="NCBI Taxonomy" id="10090"/>
    <lineage>
        <taxon>Eukaryota</taxon>
        <taxon>Metazoa</taxon>
        <taxon>Chordata</taxon>
        <taxon>Craniata</taxon>
        <taxon>Vertebrata</taxon>
        <taxon>Euteleostomi</taxon>
        <taxon>Mammalia</taxon>
        <taxon>Eutheria</taxon>
        <taxon>Euarchontoglires</taxon>
        <taxon>Glires</taxon>
        <taxon>Rodentia</taxon>
        <taxon>Myomorpha</taxon>
        <taxon>Muroidea</taxon>
        <taxon>Muridae</taxon>
        <taxon>Murinae</taxon>
        <taxon>Mus</taxon>
        <taxon>Mus</taxon>
    </lineage>
</organism>
<reference key="1">
    <citation type="journal article" date="2001" name="Proc. Natl. Acad. Sci. U.S.A.">
        <title>A gene family required for human germ cell development evolved from an ancient meiotic gene conserved in metazoans.</title>
        <authorList>
            <person name="Xu E.Y."/>
            <person name="Moore F.L."/>
            <person name="Reijo Pera R.A."/>
        </authorList>
    </citation>
    <scope>NUCLEOTIDE SEQUENCE [MRNA] OF 3-293 (ISOFOM 3)</scope>
    <scope>SUBCELLULAR LOCATION</scope>
    <scope>TISSUE SPECIFICITY</scope>
    <scope>DEVELOPMENTAL STAGE</scope>
</reference>
<reference key="2">
    <citation type="journal article" date="2005" name="Science">
        <title>The transcriptional landscape of the mammalian genome.</title>
        <authorList>
            <person name="Carninci P."/>
            <person name="Kasukawa T."/>
            <person name="Katayama S."/>
            <person name="Gough J."/>
            <person name="Frith M.C."/>
            <person name="Maeda N."/>
            <person name="Oyama R."/>
            <person name="Ravasi T."/>
            <person name="Lenhard B."/>
            <person name="Wells C."/>
            <person name="Kodzius R."/>
            <person name="Shimokawa K."/>
            <person name="Bajic V.B."/>
            <person name="Brenner S.E."/>
            <person name="Batalov S."/>
            <person name="Forrest A.R."/>
            <person name="Zavolan M."/>
            <person name="Davis M.J."/>
            <person name="Wilming L.G."/>
            <person name="Aidinis V."/>
            <person name="Allen J.E."/>
            <person name="Ambesi-Impiombato A."/>
            <person name="Apweiler R."/>
            <person name="Aturaliya R.N."/>
            <person name="Bailey T.L."/>
            <person name="Bansal M."/>
            <person name="Baxter L."/>
            <person name="Beisel K.W."/>
            <person name="Bersano T."/>
            <person name="Bono H."/>
            <person name="Chalk A.M."/>
            <person name="Chiu K.P."/>
            <person name="Choudhary V."/>
            <person name="Christoffels A."/>
            <person name="Clutterbuck D.R."/>
            <person name="Crowe M.L."/>
            <person name="Dalla E."/>
            <person name="Dalrymple B.P."/>
            <person name="de Bono B."/>
            <person name="Della Gatta G."/>
            <person name="di Bernardo D."/>
            <person name="Down T."/>
            <person name="Engstrom P."/>
            <person name="Fagiolini M."/>
            <person name="Faulkner G."/>
            <person name="Fletcher C.F."/>
            <person name="Fukushima T."/>
            <person name="Furuno M."/>
            <person name="Futaki S."/>
            <person name="Gariboldi M."/>
            <person name="Georgii-Hemming P."/>
            <person name="Gingeras T.R."/>
            <person name="Gojobori T."/>
            <person name="Green R.E."/>
            <person name="Gustincich S."/>
            <person name="Harbers M."/>
            <person name="Hayashi Y."/>
            <person name="Hensch T.K."/>
            <person name="Hirokawa N."/>
            <person name="Hill D."/>
            <person name="Huminiecki L."/>
            <person name="Iacono M."/>
            <person name="Ikeo K."/>
            <person name="Iwama A."/>
            <person name="Ishikawa T."/>
            <person name="Jakt M."/>
            <person name="Kanapin A."/>
            <person name="Katoh M."/>
            <person name="Kawasawa Y."/>
            <person name="Kelso J."/>
            <person name="Kitamura H."/>
            <person name="Kitano H."/>
            <person name="Kollias G."/>
            <person name="Krishnan S.P."/>
            <person name="Kruger A."/>
            <person name="Kummerfeld S.K."/>
            <person name="Kurochkin I.V."/>
            <person name="Lareau L.F."/>
            <person name="Lazarevic D."/>
            <person name="Lipovich L."/>
            <person name="Liu J."/>
            <person name="Liuni S."/>
            <person name="McWilliam S."/>
            <person name="Madan Babu M."/>
            <person name="Madera M."/>
            <person name="Marchionni L."/>
            <person name="Matsuda H."/>
            <person name="Matsuzawa S."/>
            <person name="Miki H."/>
            <person name="Mignone F."/>
            <person name="Miyake S."/>
            <person name="Morris K."/>
            <person name="Mottagui-Tabar S."/>
            <person name="Mulder N."/>
            <person name="Nakano N."/>
            <person name="Nakauchi H."/>
            <person name="Ng P."/>
            <person name="Nilsson R."/>
            <person name="Nishiguchi S."/>
            <person name="Nishikawa S."/>
            <person name="Nori F."/>
            <person name="Ohara O."/>
            <person name="Okazaki Y."/>
            <person name="Orlando V."/>
            <person name="Pang K.C."/>
            <person name="Pavan W.J."/>
            <person name="Pavesi G."/>
            <person name="Pesole G."/>
            <person name="Petrovsky N."/>
            <person name="Piazza S."/>
            <person name="Reed J."/>
            <person name="Reid J.F."/>
            <person name="Ring B.Z."/>
            <person name="Ringwald M."/>
            <person name="Rost B."/>
            <person name="Ruan Y."/>
            <person name="Salzberg S.L."/>
            <person name="Sandelin A."/>
            <person name="Schneider C."/>
            <person name="Schoenbach C."/>
            <person name="Sekiguchi K."/>
            <person name="Semple C.A."/>
            <person name="Seno S."/>
            <person name="Sessa L."/>
            <person name="Sheng Y."/>
            <person name="Shibata Y."/>
            <person name="Shimada H."/>
            <person name="Shimada K."/>
            <person name="Silva D."/>
            <person name="Sinclair B."/>
            <person name="Sperling S."/>
            <person name="Stupka E."/>
            <person name="Sugiura K."/>
            <person name="Sultana R."/>
            <person name="Takenaka Y."/>
            <person name="Taki K."/>
            <person name="Tammoja K."/>
            <person name="Tan S.L."/>
            <person name="Tang S."/>
            <person name="Taylor M.S."/>
            <person name="Tegner J."/>
            <person name="Teichmann S.A."/>
            <person name="Ueda H.R."/>
            <person name="van Nimwegen E."/>
            <person name="Verardo R."/>
            <person name="Wei C.L."/>
            <person name="Yagi K."/>
            <person name="Yamanishi H."/>
            <person name="Zabarovsky E."/>
            <person name="Zhu S."/>
            <person name="Zimmer A."/>
            <person name="Hide W."/>
            <person name="Bult C."/>
            <person name="Grimmond S.M."/>
            <person name="Teasdale R.D."/>
            <person name="Liu E.T."/>
            <person name="Brusic V."/>
            <person name="Quackenbush J."/>
            <person name="Wahlestedt C."/>
            <person name="Mattick J.S."/>
            <person name="Hume D.A."/>
            <person name="Kai C."/>
            <person name="Sasaki D."/>
            <person name="Tomaru Y."/>
            <person name="Fukuda S."/>
            <person name="Kanamori-Katayama M."/>
            <person name="Suzuki M."/>
            <person name="Aoki J."/>
            <person name="Arakawa T."/>
            <person name="Iida J."/>
            <person name="Imamura K."/>
            <person name="Itoh M."/>
            <person name="Kato T."/>
            <person name="Kawaji H."/>
            <person name="Kawagashira N."/>
            <person name="Kawashima T."/>
            <person name="Kojima M."/>
            <person name="Kondo S."/>
            <person name="Konno H."/>
            <person name="Nakano K."/>
            <person name="Ninomiya N."/>
            <person name="Nishio T."/>
            <person name="Okada M."/>
            <person name="Plessy C."/>
            <person name="Shibata K."/>
            <person name="Shiraki T."/>
            <person name="Suzuki S."/>
            <person name="Tagami M."/>
            <person name="Waki K."/>
            <person name="Watahiki A."/>
            <person name="Okamura-Oho Y."/>
            <person name="Suzuki H."/>
            <person name="Kawai J."/>
            <person name="Hayashizaki Y."/>
        </authorList>
    </citation>
    <scope>NUCLEOTIDE SEQUENCE [LARGE SCALE MRNA] (ISOFORM 2)</scope>
    <source>
        <strain>C57BL/6J</strain>
        <tissue>Testis</tissue>
    </source>
</reference>
<reference key="3">
    <citation type="journal article" date="2009" name="PLoS Biol.">
        <title>Lineage-specific biology revealed by a finished genome assembly of the mouse.</title>
        <authorList>
            <person name="Church D.M."/>
            <person name="Goodstadt L."/>
            <person name="Hillier L.W."/>
            <person name="Zody M.C."/>
            <person name="Goldstein S."/>
            <person name="She X."/>
            <person name="Bult C.J."/>
            <person name="Agarwala R."/>
            <person name="Cherry J.L."/>
            <person name="DiCuccio M."/>
            <person name="Hlavina W."/>
            <person name="Kapustin Y."/>
            <person name="Meric P."/>
            <person name="Maglott D."/>
            <person name="Birtle Z."/>
            <person name="Marques A.C."/>
            <person name="Graves T."/>
            <person name="Zhou S."/>
            <person name="Teague B."/>
            <person name="Potamousis K."/>
            <person name="Churas C."/>
            <person name="Place M."/>
            <person name="Herschleb J."/>
            <person name="Runnheim R."/>
            <person name="Forrest D."/>
            <person name="Amos-Landgraf J."/>
            <person name="Schwartz D.C."/>
            <person name="Cheng Z."/>
            <person name="Lindblad-Toh K."/>
            <person name="Eichler E.E."/>
            <person name="Ponting C.P."/>
        </authorList>
    </citation>
    <scope>NUCLEOTIDE SEQUENCE [LARGE SCALE GENOMIC DNA]</scope>
    <source>
        <strain>C57BL/6J</strain>
    </source>
</reference>
<reference key="4">
    <citation type="journal article" date="2010" name="Cell">
        <title>A tissue-specific atlas of mouse protein phosphorylation and expression.</title>
        <authorList>
            <person name="Huttlin E.L."/>
            <person name="Jedrychowski M.P."/>
            <person name="Elias J.E."/>
            <person name="Goswami T."/>
            <person name="Rad R."/>
            <person name="Beausoleil S.A."/>
            <person name="Villen J."/>
            <person name="Haas W."/>
            <person name="Sowa M.E."/>
            <person name="Gygi S.P."/>
        </authorList>
    </citation>
    <scope>PHOSPHORYLATION [LARGE SCALE ANALYSIS] AT SER-19; SER-21 AND SER-26 (ISOFORM 2)</scope>
    <scope>IDENTIFICATION BY MASS SPECTROMETRY [LARGE SCALE ANALYSIS]</scope>
    <source>
        <tissue>Testis</tissue>
    </source>
</reference>
<gene>
    <name evidence="7" type="primary">Boll</name>
    <name type="synonym">Boule</name>
</gene>